<evidence type="ECO:0000250" key="1"/>
<evidence type="ECO:0000269" key="2">
    <source>
    </source>
</evidence>
<evidence type="ECO:0000303" key="3">
    <source>
    </source>
</evidence>
<evidence type="ECO:0000303" key="4">
    <source>
    </source>
</evidence>
<evidence type="ECO:0000303" key="5">
    <source>
    </source>
</evidence>
<evidence type="ECO:0000305" key="6"/>
<evidence type="ECO:0007744" key="7">
    <source>
    </source>
</evidence>
<dbReference type="EMBL" id="AK096616">
    <property type="protein sequence ID" value="BAC04828.1"/>
    <property type="molecule type" value="mRNA"/>
</dbReference>
<dbReference type="EMBL" id="AK098079">
    <property type="protein sequence ID" value="BAC05229.1"/>
    <property type="molecule type" value="mRNA"/>
</dbReference>
<dbReference type="EMBL" id="BX648710">
    <property type="protein sequence ID" value="CAH10558.1"/>
    <property type="molecule type" value="mRNA"/>
</dbReference>
<dbReference type="EMBL" id="AC092755">
    <property type="status" value="NOT_ANNOTATED_CDS"/>
    <property type="molecule type" value="Genomic_DNA"/>
</dbReference>
<dbReference type="EMBL" id="CH471136">
    <property type="protein sequence ID" value="EAW99177.1"/>
    <property type="molecule type" value="Genomic_DNA"/>
</dbReference>
<dbReference type="EMBL" id="BC021720">
    <property type="protein sequence ID" value="AAH21720.1"/>
    <property type="status" value="ALT_INIT"/>
    <property type="molecule type" value="mRNA"/>
</dbReference>
<dbReference type="EMBL" id="BC031044">
    <property type="protein sequence ID" value="AAH31044.2"/>
    <property type="status" value="ALT_INIT"/>
    <property type="molecule type" value="mRNA"/>
</dbReference>
<dbReference type="CCDS" id="CCDS10299.2">
    <molecule id="Q8WW22-2"/>
</dbReference>
<dbReference type="CCDS" id="CCDS45316.1">
    <molecule id="Q8WW22-1"/>
</dbReference>
<dbReference type="CCDS" id="CCDS45317.1">
    <molecule id="Q8WW22-3"/>
</dbReference>
<dbReference type="RefSeq" id="NP_001123654.1">
    <molecule id="Q8WW22-1"/>
    <property type="nucleotide sequence ID" value="NM_001130182.2"/>
</dbReference>
<dbReference type="RefSeq" id="NP_001123655.1">
    <molecule id="Q8WW22-3"/>
    <property type="nucleotide sequence ID" value="NM_001130183.2"/>
</dbReference>
<dbReference type="RefSeq" id="NP_001374314.1">
    <molecule id="Q8WW22-1"/>
    <property type="nucleotide sequence ID" value="NM_001387385.1"/>
</dbReference>
<dbReference type="RefSeq" id="NP_001374317.1">
    <molecule id="Q8WW22-1"/>
    <property type="nucleotide sequence ID" value="NM_001387388.1"/>
</dbReference>
<dbReference type="RefSeq" id="NP_061072.3">
    <molecule id="Q8WW22-2"/>
    <property type="nucleotide sequence ID" value="NM_018602.3"/>
</dbReference>
<dbReference type="RefSeq" id="XP_005254592.1">
    <property type="nucleotide sequence ID" value="XM_005254535.3"/>
</dbReference>
<dbReference type="RefSeq" id="XP_006720664.1">
    <property type="nucleotide sequence ID" value="XM_006720601.1"/>
</dbReference>
<dbReference type="SMR" id="Q8WW22"/>
<dbReference type="BioGRID" id="120675">
    <property type="interactions" value="92"/>
</dbReference>
<dbReference type="FunCoup" id="Q8WW22">
    <property type="interactions" value="1325"/>
</dbReference>
<dbReference type="IntAct" id="Q8WW22">
    <property type="interactions" value="35"/>
</dbReference>
<dbReference type="MINT" id="Q8WW22"/>
<dbReference type="STRING" id="9606.ENSP00000378324"/>
<dbReference type="iPTMnet" id="Q8WW22"/>
<dbReference type="PhosphoSitePlus" id="Q8WW22"/>
<dbReference type="BioMuta" id="DNAJA4"/>
<dbReference type="DMDM" id="27805462"/>
<dbReference type="jPOST" id="Q8WW22"/>
<dbReference type="MassIVE" id="Q8WW22"/>
<dbReference type="PaxDb" id="9606-ENSP00000378324"/>
<dbReference type="PeptideAtlas" id="Q8WW22"/>
<dbReference type="ProteomicsDB" id="19707"/>
<dbReference type="ProteomicsDB" id="74849">
    <molecule id="Q8WW22-1"/>
</dbReference>
<dbReference type="ProteomicsDB" id="74850">
    <molecule id="Q8WW22-2"/>
</dbReference>
<dbReference type="Pumba" id="Q8WW22"/>
<dbReference type="Antibodypedia" id="27578">
    <property type="antibodies" value="144 antibodies from 24 providers"/>
</dbReference>
<dbReference type="DNASU" id="55466"/>
<dbReference type="Ensembl" id="ENST00000343789.7">
    <molecule id="Q8WW22-1"/>
    <property type="protein sequence ID" value="ENSP00000339581.3"/>
    <property type="gene ID" value="ENSG00000140403.13"/>
</dbReference>
<dbReference type="Ensembl" id="ENST00000394852.8">
    <molecule id="Q8WW22-1"/>
    <property type="protein sequence ID" value="ENSP00000378321.3"/>
    <property type="gene ID" value="ENSG00000140403.13"/>
</dbReference>
<dbReference type="Ensembl" id="ENST00000394855.7">
    <molecule id="Q8WW22-2"/>
    <property type="protein sequence ID" value="ENSP00000378324.3"/>
    <property type="gene ID" value="ENSG00000140403.13"/>
</dbReference>
<dbReference type="Ensembl" id="ENST00000446172.2">
    <molecule id="Q8WW22-3"/>
    <property type="protein sequence ID" value="ENSP00000413499.2"/>
    <property type="gene ID" value="ENSG00000140403.13"/>
</dbReference>
<dbReference type="GeneID" id="55466"/>
<dbReference type="KEGG" id="hsa:55466"/>
<dbReference type="MANE-Select" id="ENST00000394852.8">
    <property type="protein sequence ID" value="ENSP00000378321.3"/>
    <property type="RefSeq nucleotide sequence ID" value="NM_001130182.2"/>
    <property type="RefSeq protein sequence ID" value="NP_001123654.1"/>
</dbReference>
<dbReference type="UCSC" id="uc002bdi.4">
    <molecule id="Q8WW22-1"/>
    <property type="organism name" value="human"/>
</dbReference>
<dbReference type="AGR" id="HGNC:14885"/>
<dbReference type="CTD" id="55466"/>
<dbReference type="DisGeNET" id="55466"/>
<dbReference type="GeneCards" id="DNAJA4"/>
<dbReference type="HGNC" id="HGNC:14885">
    <property type="gene designation" value="DNAJA4"/>
</dbReference>
<dbReference type="HPA" id="ENSG00000140403">
    <property type="expression patterns" value="Tissue enhanced (tongue)"/>
</dbReference>
<dbReference type="neXtProt" id="NX_Q8WW22"/>
<dbReference type="OpenTargets" id="ENSG00000140403"/>
<dbReference type="PharmGKB" id="PA27411"/>
<dbReference type="VEuPathDB" id="HostDB:ENSG00000140403"/>
<dbReference type="eggNOG" id="KOG0712">
    <property type="taxonomic scope" value="Eukaryota"/>
</dbReference>
<dbReference type="GeneTree" id="ENSGT00940000155707"/>
<dbReference type="HOGENOM" id="CLU_017633_10_0_1"/>
<dbReference type="InParanoid" id="Q8WW22"/>
<dbReference type="OrthoDB" id="550424at2759"/>
<dbReference type="PAN-GO" id="Q8WW22">
    <property type="GO annotations" value="4 GO annotations based on evolutionary models"/>
</dbReference>
<dbReference type="PhylomeDB" id="Q8WW22"/>
<dbReference type="TreeFam" id="TF105141"/>
<dbReference type="PathwayCommons" id="Q8WW22"/>
<dbReference type="Reactome" id="R-HSA-3371497">
    <property type="pathway name" value="HSP90 chaperone cycle for steroid hormone receptors (SHR) in the presence of ligand"/>
</dbReference>
<dbReference type="SignaLink" id="Q8WW22"/>
<dbReference type="BioGRID-ORCS" id="55466">
    <property type="hits" value="37 hits in 1147 CRISPR screens"/>
</dbReference>
<dbReference type="CD-CODE" id="DEE660B4">
    <property type="entry name" value="Stress granule"/>
</dbReference>
<dbReference type="ChiTaRS" id="DNAJA4">
    <property type="organism name" value="human"/>
</dbReference>
<dbReference type="GenomeRNAi" id="55466"/>
<dbReference type="Pharos" id="Q8WW22">
    <property type="development level" value="Tbio"/>
</dbReference>
<dbReference type="PRO" id="PR:Q8WW22"/>
<dbReference type="Proteomes" id="UP000005640">
    <property type="component" value="Chromosome 15"/>
</dbReference>
<dbReference type="RNAct" id="Q8WW22">
    <property type="molecule type" value="protein"/>
</dbReference>
<dbReference type="Bgee" id="ENSG00000140403">
    <property type="expression patterns" value="Expressed in bronchial epithelial cell and 185 other cell types or tissues"/>
</dbReference>
<dbReference type="ExpressionAtlas" id="Q8WW22">
    <property type="expression patterns" value="baseline and differential"/>
</dbReference>
<dbReference type="GO" id="GO:0005737">
    <property type="term" value="C:cytoplasm"/>
    <property type="evidence" value="ECO:0000318"/>
    <property type="project" value="GO_Central"/>
</dbReference>
<dbReference type="GO" id="GO:0005829">
    <property type="term" value="C:cytosol"/>
    <property type="evidence" value="ECO:0000314"/>
    <property type="project" value="UniProtKB"/>
</dbReference>
<dbReference type="GO" id="GO:0016020">
    <property type="term" value="C:membrane"/>
    <property type="evidence" value="ECO:0000314"/>
    <property type="project" value="UniProtKB"/>
</dbReference>
<dbReference type="GO" id="GO:0005524">
    <property type="term" value="F:ATP binding"/>
    <property type="evidence" value="ECO:0007669"/>
    <property type="project" value="InterPro"/>
</dbReference>
<dbReference type="GO" id="GO:0030544">
    <property type="term" value="F:Hsp70 protein binding"/>
    <property type="evidence" value="ECO:0007669"/>
    <property type="project" value="InterPro"/>
</dbReference>
<dbReference type="GO" id="GO:0051087">
    <property type="term" value="F:protein-folding chaperone binding"/>
    <property type="evidence" value="ECO:0000353"/>
    <property type="project" value="UniProtKB"/>
</dbReference>
<dbReference type="GO" id="GO:0051082">
    <property type="term" value="F:unfolded protein binding"/>
    <property type="evidence" value="ECO:0000314"/>
    <property type="project" value="UniProtKB"/>
</dbReference>
<dbReference type="GO" id="GO:0008270">
    <property type="term" value="F:zinc ion binding"/>
    <property type="evidence" value="ECO:0007669"/>
    <property type="project" value="UniProtKB-KW"/>
</dbReference>
<dbReference type="GO" id="GO:0010596">
    <property type="term" value="P:negative regulation of endothelial cell migration"/>
    <property type="evidence" value="ECO:0000315"/>
    <property type="project" value="ARUK-UCL"/>
</dbReference>
<dbReference type="GO" id="GO:0090084">
    <property type="term" value="P:negative regulation of inclusion body assembly"/>
    <property type="evidence" value="ECO:0000314"/>
    <property type="project" value="UniProtKB"/>
</dbReference>
<dbReference type="GO" id="GO:0010628">
    <property type="term" value="P:positive regulation of gene expression"/>
    <property type="evidence" value="ECO:0000315"/>
    <property type="project" value="ARUK-UCL"/>
</dbReference>
<dbReference type="GO" id="GO:0042026">
    <property type="term" value="P:protein refolding"/>
    <property type="evidence" value="ECO:0000314"/>
    <property type="project" value="UniProtKB"/>
</dbReference>
<dbReference type="GO" id="GO:0009408">
    <property type="term" value="P:response to heat"/>
    <property type="evidence" value="ECO:0007669"/>
    <property type="project" value="InterPro"/>
</dbReference>
<dbReference type="CDD" id="cd06257">
    <property type="entry name" value="DnaJ"/>
    <property type="match status" value="1"/>
</dbReference>
<dbReference type="CDD" id="cd10747">
    <property type="entry name" value="DnaJ_C"/>
    <property type="match status" value="1"/>
</dbReference>
<dbReference type="CDD" id="cd10719">
    <property type="entry name" value="DnaJ_zf"/>
    <property type="match status" value="1"/>
</dbReference>
<dbReference type="FunFam" id="2.10.230.10:FF:000005">
    <property type="entry name" value="DnaJ homolog subfamily A member 1"/>
    <property type="match status" value="1"/>
</dbReference>
<dbReference type="FunFam" id="1.10.287.110:FF:000014">
    <property type="entry name" value="dnaJ homolog subfamily A member 1"/>
    <property type="match status" value="1"/>
</dbReference>
<dbReference type="FunFam" id="2.60.260.20:FF:000003">
    <property type="entry name" value="DnaJ subfamily A member 2"/>
    <property type="match status" value="1"/>
</dbReference>
<dbReference type="Gene3D" id="1.10.287.110">
    <property type="entry name" value="DnaJ domain"/>
    <property type="match status" value="1"/>
</dbReference>
<dbReference type="Gene3D" id="2.10.230.10">
    <property type="entry name" value="Heat shock protein DnaJ, cysteine-rich domain"/>
    <property type="match status" value="1"/>
</dbReference>
<dbReference type="Gene3D" id="2.60.260.20">
    <property type="entry name" value="Urease metallochaperone UreE, N-terminal domain"/>
    <property type="match status" value="2"/>
</dbReference>
<dbReference type="HAMAP" id="MF_01152">
    <property type="entry name" value="DnaJ"/>
    <property type="match status" value="1"/>
</dbReference>
<dbReference type="InterPro" id="IPR012724">
    <property type="entry name" value="DnaJ"/>
</dbReference>
<dbReference type="InterPro" id="IPR002939">
    <property type="entry name" value="DnaJ_C"/>
</dbReference>
<dbReference type="InterPro" id="IPR001623">
    <property type="entry name" value="DnaJ_domain"/>
</dbReference>
<dbReference type="InterPro" id="IPR018253">
    <property type="entry name" value="DnaJ_domain_CS"/>
</dbReference>
<dbReference type="InterPro" id="IPR044713">
    <property type="entry name" value="DNJA1/2-like"/>
</dbReference>
<dbReference type="InterPro" id="IPR008971">
    <property type="entry name" value="HSP40/DnaJ_pept-bd"/>
</dbReference>
<dbReference type="InterPro" id="IPR001305">
    <property type="entry name" value="HSP_DnaJ_Cys-rich_dom"/>
</dbReference>
<dbReference type="InterPro" id="IPR036410">
    <property type="entry name" value="HSP_DnaJ_Cys-rich_dom_sf"/>
</dbReference>
<dbReference type="InterPro" id="IPR036869">
    <property type="entry name" value="J_dom_sf"/>
</dbReference>
<dbReference type="PANTHER" id="PTHR43888">
    <property type="entry name" value="DNAJ-LIKE-2, ISOFORM A-RELATED"/>
    <property type="match status" value="1"/>
</dbReference>
<dbReference type="Pfam" id="PF00226">
    <property type="entry name" value="DnaJ"/>
    <property type="match status" value="1"/>
</dbReference>
<dbReference type="Pfam" id="PF01556">
    <property type="entry name" value="DnaJ_C"/>
    <property type="match status" value="1"/>
</dbReference>
<dbReference type="Pfam" id="PF00684">
    <property type="entry name" value="DnaJ_CXXCXGXG"/>
    <property type="match status" value="1"/>
</dbReference>
<dbReference type="PRINTS" id="PR00625">
    <property type="entry name" value="JDOMAIN"/>
</dbReference>
<dbReference type="SMART" id="SM00271">
    <property type="entry name" value="DnaJ"/>
    <property type="match status" value="1"/>
</dbReference>
<dbReference type="SUPFAM" id="SSF46565">
    <property type="entry name" value="Chaperone J-domain"/>
    <property type="match status" value="1"/>
</dbReference>
<dbReference type="SUPFAM" id="SSF57938">
    <property type="entry name" value="DnaJ/Hsp40 cysteine-rich domain"/>
    <property type="match status" value="1"/>
</dbReference>
<dbReference type="SUPFAM" id="SSF49493">
    <property type="entry name" value="HSP40/DnaJ peptide-binding domain"/>
    <property type="match status" value="2"/>
</dbReference>
<dbReference type="PROSITE" id="PS00636">
    <property type="entry name" value="DNAJ_1"/>
    <property type="match status" value="1"/>
</dbReference>
<dbReference type="PROSITE" id="PS50076">
    <property type="entry name" value="DNAJ_2"/>
    <property type="match status" value="1"/>
</dbReference>
<dbReference type="PROSITE" id="PS51188">
    <property type="entry name" value="ZF_CR"/>
    <property type="match status" value="1"/>
</dbReference>
<protein>
    <recommendedName>
        <fullName>DnaJ homolog subfamily A member 4</fullName>
    </recommendedName>
</protein>
<feature type="chain" id="PRO_0000071014" description="DnaJ homolog subfamily A member 4">
    <location>
        <begin position="1"/>
        <end position="394"/>
    </location>
</feature>
<feature type="propeptide" id="PRO_0000396760" description="Removed in mature form" evidence="1">
    <location>
        <begin position="395"/>
        <end position="397"/>
    </location>
</feature>
<feature type="domain" description="J">
    <location>
        <begin position="4"/>
        <end position="70"/>
    </location>
</feature>
<feature type="repeat" description="CXXCXGXG motif">
    <location>
        <begin position="135"/>
        <end position="142"/>
    </location>
</feature>
<feature type="repeat" description="CXXCXGXG motif">
    <location>
        <begin position="151"/>
        <end position="158"/>
    </location>
</feature>
<feature type="repeat" description="CXXCXGXG motif">
    <location>
        <begin position="178"/>
        <end position="185"/>
    </location>
</feature>
<feature type="repeat" description="CXXCXGXG motif">
    <location>
        <begin position="194"/>
        <end position="201"/>
    </location>
</feature>
<feature type="zinc finger region" description="CR-type">
    <location>
        <begin position="122"/>
        <end position="206"/>
    </location>
</feature>
<feature type="binding site" evidence="1">
    <location>
        <position position="135"/>
    </location>
    <ligand>
        <name>Zn(2+)</name>
        <dbReference type="ChEBI" id="CHEBI:29105"/>
        <label>1</label>
    </ligand>
</feature>
<feature type="binding site" evidence="1">
    <location>
        <position position="138"/>
    </location>
    <ligand>
        <name>Zn(2+)</name>
        <dbReference type="ChEBI" id="CHEBI:29105"/>
        <label>1</label>
    </ligand>
</feature>
<feature type="binding site" evidence="1">
    <location>
        <position position="151"/>
    </location>
    <ligand>
        <name>Zn(2+)</name>
        <dbReference type="ChEBI" id="CHEBI:29105"/>
        <label>2</label>
    </ligand>
</feature>
<feature type="binding site" evidence="1">
    <location>
        <position position="154"/>
    </location>
    <ligand>
        <name>Zn(2+)</name>
        <dbReference type="ChEBI" id="CHEBI:29105"/>
        <label>2</label>
    </ligand>
</feature>
<feature type="binding site" evidence="1">
    <location>
        <position position="178"/>
    </location>
    <ligand>
        <name>Zn(2+)</name>
        <dbReference type="ChEBI" id="CHEBI:29105"/>
        <label>2</label>
    </ligand>
</feature>
<feature type="binding site" evidence="1">
    <location>
        <position position="181"/>
    </location>
    <ligand>
        <name>Zn(2+)</name>
        <dbReference type="ChEBI" id="CHEBI:29105"/>
        <label>2</label>
    </ligand>
</feature>
<feature type="binding site" evidence="1">
    <location>
        <position position="194"/>
    </location>
    <ligand>
        <name>Zn(2+)</name>
        <dbReference type="ChEBI" id="CHEBI:29105"/>
        <label>1</label>
    </ligand>
</feature>
<feature type="binding site" evidence="1">
    <location>
        <position position="197"/>
    </location>
    <ligand>
        <name>Zn(2+)</name>
        <dbReference type="ChEBI" id="CHEBI:29105"/>
        <label>1</label>
    </ligand>
</feature>
<feature type="modified residue" description="Phosphoserine" evidence="7">
    <location>
        <position position="18"/>
    </location>
</feature>
<feature type="modified residue" description="Cysteine methyl ester" evidence="1">
    <location>
        <position position="394"/>
    </location>
</feature>
<feature type="lipid moiety-binding region" description="S-farnesyl cysteine" evidence="1">
    <location>
        <position position="394"/>
    </location>
</feature>
<feature type="splice variant" id="VSP_045696" description="In isoform 3." evidence="4">
    <original>MVKETQYYDILGVKPSASPEEIKKAYRKLALKYHPDKNPDEGEK</original>
    <variation>MWESLTLDSGQISALTR</variation>
    <location>
        <begin position="1"/>
        <end position="44"/>
    </location>
</feature>
<feature type="splice variant" id="VSP_038965" description="In isoform 2." evidence="3 5">
    <original>M</original>
    <variation>MARGGSQSWSSGESDGQPKEQTPEKPRHKM</variation>
    <location>
        <position position="1"/>
    </location>
</feature>
<feature type="sequence variant" id="VAR_069064" description="In dbSNP:rs17852881." evidence="2">
    <original>H</original>
    <variation>R</variation>
    <location>
        <position position="226"/>
    </location>
</feature>
<feature type="sequence conflict" description="In Ref. 1; BAC05229." evidence="6" ref="1">
    <original>Y</original>
    <variation>C</variation>
    <location>
        <position position="33"/>
    </location>
</feature>
<feature type="sequence conflict" description="In Ref. 5; AAH31044." evidence="6" ref="5">
    <original>M</original>
    <variation>T</variation>
    <location sequence="Q8WW22-3">
        <position position="1"/>
    </location>
</feature>
<gene>
    <name type="primary">DNAJA4</name>
</gene>
<sequence>MVKETQYYDILGVKPSASPEEIKKAYRKLALKYHPDKNPDEGEKFKLISQAYEVLSDPKKRDVYDQGGEQAIKEGGSGSPSFSSPMDIFDMFFGGGGRMARERRGKNVVHQLSVTLEDLYNGVTKKLALQKNVICEKCEGVGGKKGSVEKCPLCKGRGMQIHIQQIGPGMVQQIQTVCIECKGQGERINPKDRCESCSGAKVIREKKIIEVHVEKGMKDGQKILFHGEGDQEPELEPGDVIIVLDQKDHSVFQRRGHDLIMKMKIQLSEALCGFKKTIKTLDNRILVITSKAGEVIKHGDLRCVRDEGMPIYKAPLEKGILIIQFLVIFPEKHWLSLEKLPQLEALLPPRQKVRITDDMDQVELKEFCPNEQNWRQHREAYEEDEDGPQAGVQCQTA</sequence>
<accession>Q8WW22</accession>
<accession>E9PDM9</accession>
<accession>Q6AW87</accession>
<accession>Q8N5Z4</accession>
<accession>Q8N7P2</accession>
<comment type="interaction">
    <interactant intactId="EBI-2555157">
        <id>Q8WW22</id>
    </interactant>
    <interactant intactId="EBI-352957">
        <id>O60884</id>
        <label>DNAJA2</label>
    </interactant>
    <organismsDiffer>false</organismsDiffer>
    <experiments>3</experiments>
</comment>
<comment type="interaction">
    <interactant intactId="EBI-2555157">
        <id>Q8WW22</id>
    </interactant>
    <interactant intactId="EBI-9369928">
        <id>Q14249</id>
        <label>ENDOG</label>
    </interactant>
    <organismsDiffer>false</organismsDiffer>
    <experiments>2</experiments>
</comment>
<comment type="interaction">
    <interactant intactId="EBI-10277181">
        <id>Q8WW22-2</id>
    </interactant>
    <interactant intactId="EBI-744695">
        <id>Q8N9N5</id>
        <label>BANP</label>
    </interactant>
    <organismsDiffer>false</organismsDiffer>
    <experiments>3</experiments>
</comment>
<comment type="subcellular location">
    <subcellularLocation>
        <location evidence="6">Membrane</location>
        <topology evidence="6">Lipid-anchor</topology>
    </subcellularLocation>
</comment>
<comment type="alternative products">
    <event type="alternative splicing"/>
    <isoform>
        <id>Q8WW22-1</id>
        <name>1</name>
        <sequence type="displayed"/>
    </isoform>
    <isoform>
        <id>Q8WW22-2</id>
        <name>2</name>
        <sequence type="described" ref="VSP_038965"/>
    </isoform>
    <isoform>
        <id>Q8WW22-3</id>
        <name>3</name>
        <sequence type="described" ref="VSP_045696"/>
    </isoform>
</comment>
<comment type="sequence caution" evidence="6">
    <conflict type="erroneous initiation">
        <sequence resource="EMBL-CDS" id="AAH21720"/>
    </conflict>
    <text>Truncated N-terminus.</text>
</comment>
<comment type="sequence caution" evidence="6">
    <conflict type="erroneous initiation">
        <sequence resource="EMBL-CDS" id="AAH31044"/>
    </conflict>
    <text>Truncated N-terminus.</text>
</comment>
<organism>
    <name type="scientific">Homo sapiens</name>
    <name type="common">Human</name>
    <dbReference type="NCBI Taxonomy" id="9606"/>
    <lineage>
        <taxon>Eukaryota</taxon>
        <taxon>Metazoa</taxon>
        <taxon>Chordata</taxon>
        <taxon>Craniata</taxon>
        <taxon>Vertebrata</taxon>
        <taxon>Euteleostomi</taxon>
        <taxon>Mammalia</taxon>
        <taxon>Eutheria</taxon>
        <taxon>Euarchontoglires</taxon>
        <taxon>Primates</taxon>
        <taxon>Haplorrhini</taxon>
        <taxon>Catarrhini</taxon>
        <taxon>Hominidae</taxon>
        <taxon>Homo</taxon>
    </lineage>
</organism>
<keyword id="KW-0025">Alternative splicing</keyword>
<keyword id="KW-0143">Chaperone</keyword>
<keyword id="KW-0449">Lipoprotein</keyword>
<keyword id="KW-0472">Membrane</keyword>
<keyword id="KW-0479">Metal-binding</keyword>
<keyword id="KW-0488">Methylation</keyword>
<keyword id="KW-0597">Phosphoprotein</keyword>
<keyword id="KW-0636">Prenylation</keyword>
<keyword id="KW-1267">Proteomics identification</keyword>
<keyword id="KW-1185">Reference proteome</keyword>
<keyword id="KW-0677">Repeat</keyword>
<keyword id="KW-0862">Zinc</keyword>
<keyword id="KW-0863">Zinc-finger</keyword>
<reference key="1">
    <citation type="journal article" date="2004" name="Nat. Genet.">
        <title>Complete sequencing and characterization of 21,243 full-length human cDNAs.</title>
        <authorList>
            <person name="Ota T."/>
            <person name="Suzuki Y."/>
            <person name="Nishikawa T."/>
            <person name="Otsuki T."/>
            <person name="Sugiyama T."/>
            <person name="Irie R."/>
            <person name="Wakamatsu A."/>
            <person name="Hayashi K."/>
            <person name="Sato H."/>
            <person name="Nagai K."/>
            <person name="Kimura K."/>
            <person name="Makita H."/>
            <person name="Sekine M."/>
            <person name="Obayashi M."/>
            <person name="Nishi T."/>
            <person name="Shibahara T."/>
            <person name="Tanaka T."/>
            <person name="Ishii S."/>
            <person name="Yamamoto J."/>
            <person name="Saito K."/>
            <person name="Kawai Y."/>
            <person name="Isono Y."/>
            <person name="Nakamura Y."/>
            <person name="Nagahari K."/>
            <person name="Murakami K."/>
            <person name="Yasuda T."/>
            <person name="Iwayanagi T."/>
            <person name="Wagatsuma M."/>
            <person name="Shiratori A."/>
            <person name="Sudo H."/>
            <person name="Hosoiri T."/>
            <person name="Kaku Y."/>
            <person name="Kodaira H."/>
            <person name="Kondo H."/>
            <person name="Sugawara M."/>
            <person name="Takahashi M."/>
            <person name="Kanda K."/>
            <person name="Yokoi T."/>
            <person name="Furuya T."/>
            <person name="Kikkawa E."/>
            <person name="Omura Y."/>
            <person name="Abe K."/>
            <person name="Kamihara K."/>
            <person name="Katsuta N."/>
            <person name="Sato K."/>
            <person name="Tanikawa M."/>
            <person name="Yamazaki M."/>
            <person name="Ninomiya K."/>
            <person name="Ishibashi T."/>
            <person name="Yamashita H."/>
            <person name="Murakawa K."/>
            <person name="Fujimori K."/>
            <person name="Tanai H."/>
            <person name="Kimata M."/>
            <person name="Watanabe M."/>
            <person name="Hiraoka S."/>
            <person name="Chiba Y."/>
            <person name="Ishida S."/>
            <person name="Ono Y."/>
            <person name="Takiguchi S."/>
            <person name="Watanabe S."/>
            <person name="Yosida M."/>
            <person name="Hotuta T."/>
            <person name="Kusano J."/>
            <person name="Kanehori K."/>
            <person name="Takahashi-Fujii A."/>
            <person name="Hara H."/>
            <person name="Tanase T.-O."/>
            <person name="Nomura Y."/>
            <person name="Togiya S."/>
            <person name="Komai F."/>
            <person name="Hara R."/>
            <person name="Takeuchi K."/>
            <person name="Arita M."/>
            <person name="Imose N."/>
            <person name="Musashino K."/>
            <person name="Yuuki H."/>
            <person name="Oshima A."/>
            <person name="Sasaki N."/>
            <person name="Aotsuka S."/>
            <person name="Yoshikawa Y."/>
            <person name="Matsunawa H."/>
            <person name="Ichihara T."/>
            <person name="Shiohata N."/>
            <person name="Sano S."/>
            <person name="Moriya S."/>
            <person name="Momiyama H."/>
            <person name="Satoh N."/>
            <person name="Takami S."/>
            <person name="Terashima Y."/>
            <person name="Suzuki O."/>
            <person name="Nakagawa S."/>
            <person name="Senoh A."/>
            <person name="Mizoguchi H."/>
            <person name="Goto Y."/>
            <person name="Shimizu F."/>
            <person name="Wakebe H."/>
            <person name="Hishigaki H."/>
            <person name="Watanabe T."/>
            <person name="Sugiyama A."/>
            <person name="Takemoto M."/>
            <person name="Kawakami B."/>
            <person name="Yamazaki M."/>
            <person name="Watanabe K."/>
            <person name="Kumagai A."/>
            <person name="Itakura S."/>
            <person name="Fukuzumi Y."/>
            <person name="Fujimori Y."/>
            <person name="Komiyama M."/>
            <person name="Tashiro H."/>
            <person name="Tanigami A."/>
            <person name="Fujiwara T."/>
            <person name="Ono T."/>
            <person name="Yamada K."/>
            <person name="Fujii Y."/>
            <person name="Ozaki K."/>
            <person name="Hirao M."/>
            <person name="Ohmori Y."/>
            <person name="Kawabata A."/>
            <person name="Hikiji T."/>
            <person name="Kobatake N."/>
            <person name="Inagaki H."/>
            <person name="Ikema Y."/>
            <person name="Okamoto S."/>
            <person name="Okitani R."/>
            <person name="Kawakami T."/>
            <person name="Noguchi S."/>
            <person name="Itoh T."/>
            <person name="Shigeta K."/>
            <person name="Senba T."/>
            <person name="Matsumura K."/>
            <person name="Nakajima Y."/>
            <person name="Mizuno T."/>
            <person name="Morinaga M."/>
            <person name="Sasaki M."/>
            <person name="Togashi T."/>
            <person name="Oyama M."/>
            <person name="Hata H."/>
            <person name="Watanabe M."/>
            <person name="Komatsu T."/>
            <person name="Mizushima-Sugano J."/>
            <person name="Satoh T."/>
            <person name="Shirai Y."/>
            <person name="Takahashi Y."/>
            <person name="Nakagawa K."/>
            <person name="Okumura K."/>
            <person name="Nagase T."/>
            <person name="Nomura N."/>
            <person name="Kikuchi H."/>
            <person name="Masuho Y."/>
            <person name="Yamashita R."/>
            <person name="Nakai K."/>
            <person name="Yada T."/>
            <person name="Nakamura Y."/>
            <person name="Ohara O."/>
            <person name="Isogai T."/>
            <person name="Sugano S."/>
        </authorList>
    </citation>
    <scope>NUCLEOTIDE SEQUENCE [LARGE SCALE MRNA] (ISOFORMS 1 AND 2)</scope>
    <source>
        <tissue>Brain</tissue>
        <tissue>Trachea</tissue>
    </source>
</reference>
<reference key="2">
    <citation type="journal article" date="2007" name="BMC Genomics">
        <title>The full-ORF clone resource of the German cDNA consortium.</title>
        <authorList>
            <person name="Bechtel S."/>
            <person name="Rosenfelder H."/>
            <person name="Duda A."/>
            <person name="Schmidt C.P."/>
            <person name="Ernst U."/>
            <person name="Wellenreuther R."/>
            <person name="Mehrle A."/>
            <person name="Schuster C."/>
            <person name="Bahr A."/>
            <person name="Bloecker H."/>
            <person name="Heubner D."/>
            <person name="Hoerlein A."/>
            <person name="Michel G."/>
            <person name="Wedler H."/>
            <person name="Koehrer K."/>
            <person name="Ottenwaelder B."/>
            <person name="Poustka A."/>
            <person name="Wiemann S."/>
            <person name="Schupp I."/>
        </authorList>
    </citation>
    <scope>NUCLEOTIDE SEQUENCE [LARGE SCALE MRNA] (ISOFORM 2)</scope>
    <source>
        <tissue>Endometrial tumor</tissue>
    </source>
</reference>
<reference key="3">
    <citation type="journal article" date="2006" name="Nature">
        <title>Analysis of the DNA sequence and duplication history of human chromosome 15.</title>
        <authorList>
            <person name="Zody M.C."/>
            <person name="Garber M."/>
            <person name="Sharpe T."/>
            <person name="Young S.K."/>
            <person name="Rowen L."/>
            <person name="O'Neill K."/>
            <person name="Whittaker C.A."/>
            <person name="Kamal M."/>
            <person name="Chang J.L."/>
            <person name="Cuomo C.A."/>
            <person name="Dewar K."/>
            <person name="FitzGerald M.G."/>
            <person name="Kodira C.D."/>
            <person name="Madan A."/>
            <person name="Qin S."/>
            <person name="Yang X."/>
            <person name="Abbasi N."/>
            <person name="Abouelleil A."/>
            <person name="Arachchi H.M."/>
            <person name="Baradarani L."/>
            <person name="Birditt B."/>
            <person name="Bloom S."/>
            <person name="Bloom T."/>
            <person name="Borowsky M.L."/>
            <person name="Burke J."/>
            <person name="Butler J."/>
            <person name="Cook A."/>
            <person name="DeArellano K."/>
            <person name="DeCaprio D."/>
            <person name="Dorris L. III"/>
            <person name="Dors M."/>
            <person name="Eichler E.E."/>
            <person name="Engels R."/>
            <person name="Fahey J."/>
            <person name="Fleetwood P."/>
            <person name="Friedman C."/>
            <person name="Gearin G."/>
            <person name="Hall J.L."/>
            <person name="Hensley G."/>
            <person name="Johnson E."/>
            <person name="Jones C."/>
            <person name="Kamat A."/>
            <person name="Kaur A."/>
            <person name="Locke D.P."/>
            <person name="Madan A."/>
            <person name="Munson G."/>
            <person name="Jaffe D.B."/>
            <person name="Lui A."/>
            <person name="Macdonald P."/>
            <person name="Mauceli E."/>
            <person name="Naylor J.W."/>
            <person name="Nesbitt R."/>
            <person name="Nicol R."/>
            <person name="O'Leary S.B."/>
            <person name="Ratcliffe A."/>
            <person name="Rounsley S."/>
            <person name="She X."/>
            <person name="Sneddon K.M.B."/>
            <person name="Stewart S."/>
            <person name="Sougnez C."/>
            <person name="Stone S.M."/>
            <person name="Topham K."/>
            <person name="Vincent D."/>
            <person name="Wang S."/>
            <person name="Zimmer A.R."/>
            <person name="Birren B.W."/>
            <person name="Hood L."/>
            <person name="Lander E.S."/>
            <person name="Nusbaum C."/>
        </authorList>
    </citation>
    <scope>NUCLEOTIDE SEQUENCE [LARGE SCALE GENOMIC DNA]</scope>
</reference>
<reference key="4">
    <citation type="submission" date="2005-07" db="EMBL/GenBank/DDBJ databases">
        <authorList>
            <person name="Mural R.J."/>
            <person name="Istrail S."/>
            <person name="Sutton G.G."/>
            <person name="Florea L."/>
            <person name="Halpern A.L."/>
            <person name="Mobarry C.M."/>
            <person name="Lippert R."/>
            <person name="Walenz B."/>
            <person name="Shatkay H."/>
            <person name="Dew I."/>
            <person name="Miller J.R."/>
            <person name="Flanigan M.J."/>
            <person name="Edwards N.J."/>
            <person name="Bolanos R."/>
            <person name="Fasulo D."/>
            <person name="Halldorsson B.V."/>
            <person name="Hannenhalli S."/>
            <person name="Turner R."/>
            <person name="Yooseph S."/>
            <person name="Lu F."/>
            <person name="Nusskern D.R."/>
            <person name="Shue B.C."/>
            <person name="Zheng X.H."/>
            <person name="Zhong F."/>
            <person name="Delcher A.L."/>
            <person name="Huson D.H."/>
            <person name="Kravitz S.A."/>
            <person name="Mouchard L."/>
            <person name="Reinert K."/>
            <person name="Remington K.A."/>
            <person name="Clark A.G."/>
            <person name="Waterman M.S."/>
            <person name="Eichler E.E."/>
            <person name="Adams M.D."/>
            <person name="Hunkapiller M.W."/>
            <person name="Myers E.W."/>
            <person name="Venter J.C."/>
        </authorList>
    </citation>
    <scope>NUCLEOTIDE SEQUENCE [LARGE SCALE GENOMIC DNA]</scope>
</reference>
<reference key="5">
    <citation type="journal article" date="2004" name="Genome Res.">
        <title>The status, quality, and expansion of the NIH full-length cDNA project: the Mammalian Gene Collection (MGC).</title>
        <authorList>
            <consortium name="The MGC Project Team"/>
        </authorList>
    </citation>
    <scope>NUCLEOTIDE SEQUENCE [LARGE SCALE MRNA] (ISOFORMS 1 AND 3)</scope>
    <scope>VARIANT ARG-226</scope>
    <source>
        <tissue>Brain</tissue>
        <tissue>Testis</tissue>
    </source>
</reference>
<reference key="6">
    <citation type="journal article" date="2010" name="Sci. Signal.">
        <title>Quantitative phosphoproteomics reveals widespread full phosphorylation site occupancy during mitosis.</title>
        <authorList>
            <person name="Olsen J.V."/>
            <person name="Vermeulen M."/>
            <person name="Santamaria A."/>
            <person name="Kumar C."/>
            <person name="Miller M.L."/>
            <person name="Jensen L.J."/>
            <person name="Gnad F."/>
            <person name="Cox J."/>
            <person name="Jensen T.S."/>
            <person name="Nigg E.A."/>
            <person name="Brunak S."/>
            <person name="Mann M."/>
        </authorList>
    </citation>
    <scope>IDENTIFICATION BY MASS SPECTROMETRY [LARGE SCALE ANALYSIS]</scope>
    <source>
        <tissue>Cervix carcinoma</tissue>
    </source>
</reference>
<reference key="7">
    <citation type="journal article" date="2013" name="J. Proteome Res.">
        <title>Toward a comprehensive characterization of a human cancer cell phosphoproteome.</title>
        <authorList>
            <person name="Zhou H."/>
            <person name="Di Palma S."/>
            <person name="Preisinger C."/>
            <person name="Peng M."/>
            <person name="Polat A.N."/>
            <person name="Heck A.J."/>
            <person name="Mohammed S."/>
        </authorList>
    </citation>
    <scope>PHOSPHORYLATION [LARGE SCALE ANALYSIS] AT SER-18</scope>
    <scope>IDENTIFICATION BY MASS SPECTROMETRY [LARGE SCALE ANALYSIS]</scope>
    <source>
        <tissue>Cervix carcinoma</tissue>
    </source>
</reference>
<proteinExistence type="evidence at protein level"/>
<name>DNJA4_HUMAN</name>